<evidence type="ECO:0000255" key="1">
    <source>
        <dbReference type="HAMAP-Rule" id="MF_00333"/>
    </source>
</evidence>
<proteinExistence type="inferred from homology"/>
<accession>B1JW43</accession>
<keyword id="KW-0963">Cytoplasm</keyword>
<keyword id="KW-0350">Heme biosynthesis</keyword>
<keyword id="KW-0479">Metal-binding</keyword>
<keyword id="KW-0560">Oxidoreductase</keyword>
<keyword id="KW-0627">Porphyrin biosynthesis</keyword>
<protein>
    <recommendedName>
        <fullName evidence="1">Oxygen-dependent coproporphyrinogen-III oxidase</fullName>
        <shortName evidence="1">CPO</shortName>
        <shortName evidence="1">Coprogen oxidase</shortName>
        <shortName evidence="1">Coproporphyrinogenase</shortName>
        <ecNumber evidence="1">1.3.3.3</ecNumber>
    </recommendedName>
</protein>
<name>HEM6_BURO0</name>
<dbReference type="EC" id="1.3.3.3" evidence="1"/>
<dbReference type="EMBL" id="CP000958">
    <property type="protein sequence ID" value="ACA91480.1"/>
    <property type="molecule type" value="Genomic_DNA"/>
</dbReference>
<dbReference type="RefSeq" id="WP_012328928.1">
    <property type="nucleotide sequence ID" value="NC_010508.1"/>
</dbReference>
<dbReference type="SMR" id="B1JW43"/>
<dbReference type="GeneID" id="83049108"/>
<dbReference type="KEGG" id="bcm:Bcenmc03_2319"/>
<dbReference type="HOGENOM" id="CLU_026169_0_1_4"/>
<dbReference type="UniPathway" id="UPA00251">
    <property type="reaction ID" value="UER00322"/>
</dbReference>
<dbReference type="Proteomes" id="UP000002169">
    <property type="component" value="Chromosome 1"/>
</dbReference>
<dbReference type="GO" id="GO:0005737">
    <property type="term" value="C:cytoplasm"/>
    <property type="evidence" value="ECO:0007669"/>
    <property type="project" value="UniProtKB-SubCell"/>
</dbReference>
<dbReference type="GO" id="GO:0004109">
    <property type="term" value="F:coproporphyrinogen oxidase activity"/>
    <property type="evidence" value="ECO:0007669"/>
    <property type="project" value="UniProtKB-UniRule"/>
</dbReference>
<dbReference type="GO" id="GO:0046872">
    <property type="term" value="F:metal ion binding"/>
    <property type="evidence" value="ECO:0007669"/>
    <property type="project" value="UniProtKB-KW"/>
</dbReference>
<dbReference type="GO" id="GO:0042803">
    <property type="term" value="F:protein homodimerization activity"/>
    <property type="evidence" value="ECO:0000250"/>
    <property type="project" value="UniProtKB"/>
</dbReference>
<dbReference type="GO" id="GO:0006782">
    <property type="term" value="P:protoporphyrinogen IX biosynthetic process"/>
    <property type="evidence" value="ECO:0007669"/>
    <property type="project" value="UniProtKB-UniRule"/>
</dbReference>
<dbReference type="FunFam" id="3.40.1500.10:FF:000001">
    <property type="entry name" value="Oxygen-dependent coproporphyrinogen-III oxidase"/>
    <property type="match status" value="1"/>
</dbReference>
<dbReference type="Gene3D" id="3.40.1500.10">
    <property type="entry name" value="Coproporphyrinogen III oxidase, aerobic"/>
    <property type="match status" value="1"/>
</dbReference>
<dbReference type="HAMAP" id="MF_00333">
    <property type="entry name" value="Coprogen_oxidas"/>
    <property type="match status" value="1"/>
</dbReference>
<dbReference type="InterPro" id="IPR001260">
    <property type="entry name" value="Coprogen_oxidase_aer"/>
</dbReference>
<dbReference type="InterPro" id="IPR036406">
    <property type="entry name" value="Coprogen_oxidase_aer_sf"/>
</dbReference>
<dbReference type="InterPro" id="IPR018375">
    <property type="entry name" value="Coprogen_oxidase_CS"/>
</dbReference>
<dbReference type="NCBIfam" id="NF003727">
    <property type="entry name" value="PRK05330.1"/>
    <property type="match status" value="1"/>
</dbReference>
<dbReference type="PANTHER" id="PTHR10755">
    <property type="entry name" value="COPROPORPHYRINOGEN III OXIDASE, MITOCHONDRIAL"/>
    <property type="match status" value="1"/>
</dbReference>
<dbReference type="PANTHER" id="PTHR10755:SF0">
    <property type="entry name" value="OXYGEN-DEPENDENT COPROPORPHYRINOGEN-III OXIDASE, MITOCHONDRIAL"/>
    <property type="match status" value="1"/>
</dbReference>
<dbReference type="Pfam" id="PF01218">
    <property type="entry name" value="Coprogen_oxidas"/>
    <property type="match status" value="1"/>
</dbReference>
<dbReference type="PIRSF" id="PIRSF000166">
    <property type="entry name" value="Coproporphyri_ox"/>
    <property type="match status" value="1"/>
</dbReference>
<dbReference type="PRINTS" id="PR00073">
    <property type="entry name" value="COPRGNOXDASE"/>
</dbReference>
<dbReference type="SUPFAM" id="SSF102886">
    <property type="entry name" value="Coproporphyrinogen III oxidase"/>
    <property type="match status" value="1"/>
</dbReference>
<dbReference type="PROSITE" id="PS01021">
    <property type="entry name" value="COPROGEN_OXIDASE"/>
    <property type="match status" value="1"/>
</dbReference>
<feature type="chain" id="PRO_1000119791" description="Oxygen-dependent coproporphyrinogen-III oxidase">
    <location>
        <begin position="1"/>
        <end position="307"/>
    </location>
</feature>
<feature type="region of interest" description="Important for dimerization" evidence="1">
    <location>
        <begin position="247"/>
        <end position="282"/>
    </location>
</feature>
<feature type="active site" description="Proton donor" evidence="1">
    <location>
        <position position="113"/>
    </location>
</feature>
<feature type="binding site" evidence="1">
    <location>
        <position position="99"/>
    </location>
    <ligand>
        <name>substrate</name>
    </ligand>
</feature>
<feature type="binding site" evidence="1">
    <location>
        <position position="103"/>
    </location>
    <ligand>
        <name>a divalent metal cation</name>
        <dbReference type="ChEBI" id="CHEBI:60240"/>
    </ligand>
</feature>
<feature type="binding site" evidence="1">
    <location>
        <position position="113"/>
    </location>
    <ligand>
        <name>a divalent metal cation</name>
        <dbReference type="ChEBI" id="CHEBI:60240"/>
    </ligand>
</feature>
<feature type="binding site" evidence="1">
    <location>
        <begin position="115"/>
        <end position="117"/>
    </location>
    <ligand>
        <name>substrate</name>
    </ligand>
</feature>
<feature type="binding site" evidence="1">
    <location>
        <position position="152"/>
    </location>
    <ligand>
        <name>a divalent metal cation</name>
        <dbReference type="ChEBI" id="CHEBI:60240"/>
    </ligand>
</feature>
<feature type="binding site" evidence="1">
    <location>
        <position position="182"/>
    </location>
    <ligand>
        <name>a divalent metal cation</name>
        <dbReference type="ChEBI" id="CHEBI:60240"/>
    </ligand>
</feature>
<feature type="binding site" evidence="1">
    <location>
        <begin position="265"/>
        <end position="267"/>
    </location>
    <ligand>
        <name>substrate</name>
    </ligand>
</feature>
<feature type="site" description="Important for dimerization" evidence="1">
    <location>
        <position position="182"/>
    </location>
</feature>
<gene>
    <name evidence="1" type="primary">hemF</name>
    <name type="ordered locus">Bcenmc03_2319</name>
</gene>
<sequence>MTDSTYDVTRVRTYLQGLQTRIADALGALDGTPLATDTWQRGPAERLRGGGCTRILEGGRVFERAGIGFSDVAGDALPPSASAARPQLAGRGFEALGVSLVLHPRNPYCPTVHMNVRMLIATKPGEAPVFWFGGGMDLTPVYGFEDDARHFHQTCKDALDPFGAELYPRFKQWCDEYFFLKHRNETRGIGGIFFDDFSEPGFERSFDLMQSVGDAFLHAYLPIVERRAELPYGERERDFQAYRRGRYVEFNLVFDRGTLFGLQSGGRTESILMSMPPVANWRYNWQPEPDSPEARLYSDFLVPRDWV</sequence>
<comment type="function">
    <text evidence="1">Involved in the heme biosynthesis. Catalyzes the aerobic oxidative decarboxylation of propionate groups of rings A and B of coproporphyrinogen-III to yield the vinyl groups in protoporphyrinogen-IX.</text>
</comment>
<comment type="catalytic activity">
    <reaction evidence="1">
        <text>coproporphyrinogen III + O2 + 2 H(+) = protoporphyrinogen IX + 2 CO2 + 2 H2O</text>
        <dbReference type="Rhea" id="RHEA:18257"/>
        <dbReference type="ChEBI" id="CHEBI:15377"/>
        <dbReference type="ChEBI" id="CHEBI:15378"/>
        <dbReference type="ChEBI" id="CHEBI:15379"/>
        <dbReference type="ChEBI" id="CHEBI:16526"/>
        <dbReference type="ChEBI" id="CHEBI:57307"/>
        <dbReference type="ChEBI" id="CHEBI:57309"/>
        <dbReference type="EC" id="1.3.3.3"/>
    </reaction>
</comment>
<comment type="cofactor">
    <cofactor evidence="1">
        <name>a divalent metal cation</name>
        <dbReference type="ChEBI" id="CHEBI:60240"/>
    </cofactor>
</comment>
<comment type="pathway">
    <text evidence="1">Porphyrin-containing compound metabolism; protoporphyrin-IX biosynthesis; protoporphyrinogen-IX from coproporphyrinogen-III (O2 route): step 1/1.</text>
</comment>
<comment type="subunit">
    <text evidence="1">Homodimer.</text>
</comment>
<comment type="subcellular location">
    <subcellularLocation>
        <location evidence="1">Cytoplasm</location>
    </subcellularLocation>
</comment>
<comment type="similarity">
    <text evidence="1">Belongs to the aerobic coproporphyrinogen-III oxidase family.</text>
</comment>
<organism>
    <name type="scientific">Burkholderia orbicola (strain MC0-3)</name>
    <dbReference type="NCBI Taxonomy" id="406425"/>
    <lineage>
        <taxon>Bacteria</taxon>
        <taxon>Pseudomonadati</taxon>
        <taxon>Pseudomonadota</taxon>
        <taxon>Betaproteobacteria</taxon>
        <taxon>Burkholderiales</taxon>
        <taxon>Burkholderiaceae</taxon>
        <taxon>Burkholderia</taxon>
        <taxon>Burkholderia cepacia complex</taxon>
        <taxon>Burkholderia orbicola</taxon>
    </lineage>
</organism>
<reference key="1">
    <citation type="submission" date="2008-02" db="EMBL/GenBank/DDBJ databases">
        <title>Complete sequence of chromosome 1 of Burkholderia cenocepacia MC0-3.</title>
        <authorList>
            <person name="Copeland A."/>
            <person name="Lucas S."/>
            <person name="Lapidus A."/>
            <person name="Barry K."/>
            <person name="Bruce D."/>
            <person name="Goodwin L."/>
            <person name="Glavina del Rio T."/>
            <person name="Dalin E."/>
            <person name="Tice H."/>
            <person name="Pitluck S."/>
            <person name="Chain P."/>
            <person name="Malfatti S."/>
            <person name="Shin M."/>
            <person name="Vergez L."/>
            <person name="Schmutz J."/>
            <person name="Larimer F."/>
            <person name="Land M."/>
            <person name="Hauser L."/>
            <person name="Kyrpides N."/>
            <person name="Mikhailova N."/>
            <person name="Tiedje J."/>
            <person name="Richardson P."/>
        </authorList>
    </citation>
    <scope>NUCLEOTIDE SEQUENCE [LARGE SCALE GENOMIC DNA]</scope>
    <source>
        <strain>MC0-3</strain>
    </source>
</reference>